<sequence length="100" mass="11050">MNLTPREKDKLLISMAAMVARRRLERGVKLNYPEAIALISDFVVEGARDGRPVAELMEAGAHVIGRSQVMEGVAEMIHDVQVEATFPDGTKLVTVHEPIR</sequence>
<reference key="1">
    <citation type="journal article" date="2002" name="Arch. Microbiol.">
        <title>Characterization of the urease gene cluster from Rhizobium leguminosarum bv. viciae.</title>
        <authorList>
            <person name="Toffanin A."/>
            <person name="Cadahia E."/>
            <person name="Imperial J."/>
            <person name="Ruiz-Argueso T."/>
            <person name="Palacios M."/>
        </authorList>
    </citation>
    <scope>NUCLEOTIDE SEQUENCE [GENOMIC DNA]</scope>
    <scope>INDUCTION</scope>
    <scope>DEVELOPMENTAL STAGE</scope>
    <source>
        <strain>UPM791</strain>
    </source>
</reference>
<organism>
    <name type="scientific">Rhizobium leguminosarum bv. viciae</name>
    <dbReference type="NCBI Taxonomy" id="387"/>
    <lineage>
        <taxon>Bacteria</taxon>
        <taxon>Pseudomonadati</taxon>
        <taxon>Pseudomonadota</taxon>
        <taxon>Alphaproteobacteria</taxon>
        <taxon>Hyphomicrobiales</taxon>
        <taxon>Rhizobiaceae</taxon>
        <taxon>Rhizobium/Agrobacterium group</taxon>
        <taxon>Rhizobium</taxon>
    </lineage>
</organism>
<gene>
    <name evidence="1" type="primary">ureA</name>
</gene>
<dbReference type="EC" id="3.5.1.5" evidence="1"/>
<dbReference type="EMBL" id="AF347070">
    <property type="protein sequence ID" value="AAL83825.1"/>
    <property type="molecule type" value="Genomic_DNA"/>
</dbReference>
<dbReference type="RefSeq" id="WP_018243290.1">
    <property type="nucleotide sequence ID" value="NZ_WIEJ01000001.1"/>
</dbReference>
<dbReference type="SMR" id="Q8RPY7"/>
<dbReference type="UniPathway" id="UPA00258">
    <property type="reaction ID" value="UER00370"/>
</dbReference>
<dbReference type="GO" id="GO:0005737">
    <property type="term" value="C:cytoplasm"/>
    <property type="evidence" value="ECO:0007669"/>
    <property type="project" value="UniProtKB-SubCell"/>
</dbReference>
<dbReference type="GO" id="GO:0016151">
    <property type="term" value="F:nickel cation binding"/>
    <property type="evidence" value="ECO:0007669"/>
    <property type="project" value="InterPro"/>
</dbReference>
<dbReference type="GO" id="GO:0009039">
    <property type="term" value="F:urease activity"/>
    <property type="evidence" value="ECO:0007669"/>
    <property type="project" value="UniProtKB-UniRule"/>
</dbReference>
<dbReference type="GO" id="GO:0043419">
    <property type="term" value="P:urea catabolic process"/>
    <property type="evidence" value="ECO:0007669"/>
    <property type="project" value="UniProtKB-UniRule"/>
</dbReference>
<dbReference type="CDD" id="cd00390">
    <property type="entry name" value="Urease_gamma"/>
    <property type="match status" value="1"/>
</dbReference>
<dbReference type="Gene3D" id="3.30.280.10">
    <property type="entry name" value="Urease, gamma-like subunit"/>
    <property type="match status" value="1"/>
</dbReference>
<dbReference type="HAMAP" id="MF_00739">
    <property type="entry name" value="Urease_gamma"/>
    <property type="match status" value="1"/>
</dbReference>
<dbReference type="InterPro" id="IPR012010">
    <property type="entry name" value="Urease_gamma"/>
</dbReference>
<dbReference type="InterPro" id="IPR002026">
    <property type="entry name" value="Urease_gamma/gamma-beta_su"/>
</dbReference>
<dbReference type="InterPro" id="IPR036463">
    <property type="entry name" value="Urease_gamma_sf"/>
</dbReference>
<dbReference type="InterPro" id="IPR050069">
    <property type="entry name" value="Urease_subunit"/>
</dbReference>
<dbReference type="NCBIfam" id="NF009712">
    <property type="entry name" value="PRK13241.1"/>
    <property type="match status" value="1"/>
</dbReference>
<dbReference type="NCBIfam" id="TIGR00193">
    <property type="entry name" value="urease_gam"/>
    <property type="match status" value="1"/>
</dbReference>
<dbReference type="PANTHER" id="PTHR33569">
    <property type="entry name" value="UREASE"/>
    <property type="match status" value="1"/>
</dbReference>
<dbReference type="PANTHER" id="PTHR33569:SF1">
    <property type="entry name" value="UREASE"/>
    <property type="match status" value="1"/>
</dbReference>
<dbReference type="Pfam" id="PF00547">
    <property type="entry name" value="Urease_gamma"/>
    <property type="match status" value="1"/>
</dbReference>
<dbReference type="PIRSF" id="PIRSF001223">
    <property type="entry name" value="Urease_gamma"/>
    <property type="match status" value="1"/>
</dbReference>
<dbReference type="SUPFAM" id="SSF54111">
    <property type="entry name" value="Urease, gamma-subunit"/>
    <property type="match status" value="1"/>
</dbReference>
<proteinExistence type="evidence at transcript level"/>
<name>URE3_RHILV</name>
<evidence type="ECO:0000255" key="1">
    <source>
        <dbReference type="HAMAP-Rule" id="MF_00739"/>
    </source>
</evidence>
<evidence type="ECO:0000269" key="2">
    <source>
    </source>
</evidence>
<feature type="chain" id="PRO_0000098033" description="Urease subunit gamma">
    <location>
        <begin position="1"/>
        <end position="100"/>
    </location>
</feature>
<accession>Q8RPY7</accession>
<comment type="catalytic activity">
    <reaction evidence="1">
        <text>urea + 2 H2O + H(+) = hydrogencarbonate + 2 NH4(+)</text>
        <dbReference type="Rhea" id="RHEA:20557"/>
        <dbReference type="ChEBI" id="CHEBI:15377"/>
        <dbReference type="ChEBI" id="CHEBI:15378"/>
        <dbReference type="ChEBI" id="CHEBI:16199"/>
        <dbReference type="ChEBI" id="CHEBI:17544"/>
        <dbReference type="ChEBI" id="CHEBI:28938"/>
        <dbReference type="EC" id="3.5.1.5"/>
    </reaction>
</comment>
<comment type="pathway">
    <text evidence="1">Nitrogen metabolism; urea degradation; CO(2) and NH(3) from urea (urease route): step 1/1.</text>
</comment>
<comment type="subunit">
    <text evidence="1">Heterotrimer of UreA (gamma), UreB (beta) and UreC (alpha) subunits. Three heterotrimers associate to form the active enzyme.</text>
</comment>
<comment type="subcellular location">
    <subcellularLocation>
        <location evidence="1">Cytoplasm</location>
    </subcellularLocation>
</comment>
<comment type="developmental stage">
    <text evidence="2">Expressed in bacteroids from pea nodules.</text>
</comment>
<comment type="induction">
    <text evidence="2">Repressed by ammonium.</text>
</comment>
<comment type="similarity">
    <text evidence="1">Belongs to the urease gamma subunit family.</text>
</comment>
<keyword id="KW-0963">Cytoplasm</keyword>
<keyword id="KW-0378">Hydrolase</keyword>
<protein>
    <recommendedName>
        <fullName evidence="1">Urease subunit gamma</fullName>
        <ecNumber evidence="1">3.5.1.5</ecNumber>
    </recommendedName>
    <alternativeName>
        <fullName evidence="1">Urea amidohydrolase subunit gamma</fullName>
    </alternativeName>
</protein>